<comment type="pathway">
    <text evidence="4">Glycan metabolism.</text>
</comment>
<comment type="subcellular location">
    <subcellularLocation>
        <location evidence="2">Membrane</location>
        <topology evidence="4">Single-pass type II membrane protein</topology>
    </subcellularLocation>
</comment>
<comment type="similarity">
    <text evidence="4">Belongs to the glycosyltransferase GT106 family.</text>
</comment>
<comment type="sequence caution" evidence="4">
    <conflict type="erroneous gene model prediction">
        <sequence resource="EMBL-CDS" id="BAB11569"/>
    </conflict>
</comment>
<accession>Q0WUZ5</accession>
<accession>Q8RWD4</accession>
<accession>Q9FKP3</accession>
<dbReference type="EC" id="2.4.1.-" evidence="4"/>
<dbReference type="EMBL" id="KY906092">
    <property type="protein sequence ID" value="ARJ31456.1"/>
    <property type="molecule type" value="mRNA"/>
</dbReference>
<dbReference type="EMBL" id="AB011479">
    <property type="protein sequence ID" value="BAB11569.1"/>
    <property type="status" value="ALT_SEQ"/>
    <property type="molecule type" value="Genomic_DNA"/>
</dbReference>
<dbReference type="EMBL" id="CP002688">
    <property type="protein sequence ID" value="AED98060.1"/>
    <property type="molecule type" value="Genomic_DNA"/>
</dbReference>
<dbReference type="EMBL" id="AY093167">
    <property type="protein sequence ID" value="AAM13166.1"/>
    <property type="molecule type" value="mRNA"/>
</dbReference>
<dbReference type="EMBL" id="AY128819">
    <property type="protein sequence ID" value="AAM91219.1"/>
    <property type="molecule type" value="mRNA"/>
</dbReference>
<dbReference type="EMBL" id="AK226986">
    <property type="protein sequence ID" value="BAE99053.1"/>
    <property type="molecule type" value="mRNA"/>
</dbReference>
<dbReference type="RefSeq" id="NP_201350.2">
    <property type="nucleotide sequence ID" value="NM_125945.5"/>
</dbReference>
<dbReference type="FunCoup" id="Q0WUZ5">
    <property type="interactions" value="17"/>
</dbReference>
<dbReference type="GlyCosmos" id="Q0WUZ5">
    <property type="glycosylation" value="3 sites, No reported glycans"/>
</dbReference>
<dbReference type="GlyGen" id="Q0WUZ5">
    <property type="glycosylation" value="3 sites"/>
</dbReference>
<dbReference type="PaxDb" id="3702-AT5G65470.1"/>
<dbReference type="ProteomicsDB" id="238934"/>
<dbReference type="EnsemblPlants" id="AT5G65470.1">
    <property type="protein sequence ID" value="AT5G65470.1"/>
    <property type="gene ID" value="AT5G65470"/>
</dbReference>
<dbReference type="GeneID" id="836672"/>
<dbReference type="Gramene" id="AT5G65470.1">
    <property type="protein sequence ID" value="AT5G65470.1"/>
    <property type="gene ID" value="AT5G65470"/>
</dbReference>
<dbReference type="KEGG" id="ath:AT5G65470"/>
<dbReference type="Araport" id="AT5G65470"/>
<dbReference type="TAIR" id="AT5G65470"/>
<dbReference type="eggNOG" id="ENOG502QUG0">
    <property type="taxonomic scope" value="Eukaryota"/>
</dbReference>
<dbReference type="HOGENOM" id="CLU_018420_8_2_1"/>
<dbReference type="InParanoid" id="Q0WUZ5"/>
<dbReference type="OMA" id="LPMDIQH"/>
<dbReference type="OrthoDB" id="1882547at2759"/>
<dbReference type="PhylomeDB" id="Q0WUZ5"/>
<dbReference type="PRO" id="PR:Q0WUZ5"/>
<dbReference type="Proteomes" id="UP000006548">
    <property type="component" value="Chromosome 5"/>
</dbReference>
<dbReference type="ExpressionAtlas" id="Q0WUZ5">
    <property type="expression patterns" value="baseline and differential"/>
</dbReference>
<dbReference type="GO" id="GO:0000137">
    <property type="term" value="C:Golgi cis cisterna"/>
    <property type="evidence" value="ECO:0007005"/>
    <property type="project" value="TAIR"/>
</dbReference>
<dbReference type="GO" id="GO:0016020">
    <property type="term" value="C:membrane"/>
    <property type="evidence" value="ECO:0007669"/>
    <property type="project" value="UniProtKB-SubCell"/>
</dbReference>
<dbReference type="GO" id="GO:0016757">
    <property type="term" value="F:glycosyltransferase activity"/>
    <property type="evidence" value="ECO:0007669"/>
    <property type="project" value="UniProtKB-KW"/>
</dbReference>
<dbReference type="GO" id="GO:0006004">
    <property type="term" value="P:fucose metabolic process"/>
    <property type="evidence" value="ECO:0007669"/>
    <property type="project" value="UniProtKB-KW"/>
</dbReference>
<dbReference type="CDD" id="cd11299">
    <property type="entry name" value="O-FucT_plant"/>
    <property type="match status" value="1"/>
</dbReference>
<dbReference type="InterPro" id="IPR024709">
    <property type="entry name" value="FucosylTrfase_pln"/>
</dbReference>
<dbReference type="InterPro" id="IPR019378">
    <property type="entry name" value="GDP-Fuc_O-FucTrfase"/>
</dbReference>
<dbReference type="InterPro" id="IPR052272">
    <property type="entry name" value="GT106_glycosyltransferase"/>
</dbReference>
<dbReference type="PANTHER" id="PTHR31933">
    <property type="entry name" value="O-FUCOSYLTRANSFERASE 2-RELATED"/>
    <property type="match status" value="1"/>
</dbReference>
<dbReference type="PANTHER" id="PTHR31933:SF19">
    <property type="entry name" value="O-FUCOSYLTRANSFERASE 39"/>
    <property type="match status" value="1"/>
</dbReference>
<dbReference type="Pfam" id="PF10250">
    <property type="entry name" value="O-FucT"/>
    <property type="match status" value="1"/>
</dbReference>
<dbReference type="PIRSF" id="PIRSF009360">
    <property type="entry name" value="UCP009360"/>
    <property type="match status" value="1"/>
</dbReference>
<sequence length="504" mass="57068">MNPYDAKDRRWILSMFFFVVLFCNNVSTSSSSSEVITIKPRHLSLLKSALQRSSGEQSDLWRPLTDQGWSPCIDLGNSPSLPDKTAGYVQVFLDGGLNQQRMGICDAVAVAKILNATLVIPYLEVNPVWQDSSSFVDIFDVDHFIDSLKDDIRVVRELPDEYSWSTREYYGTAVRETRVKTAPVHASANWYIENVSPVLQSYGIAAISPFSHRLSFDHLPAEIQRLRCKVNFQALRFVPHITSLGDALVSRLRNPSWRSNKEQKNVDHLGDMTNPHRRQEPGKFAVLHLRFDKDMAAHSACDFGGGKAEKLSLAKYRQMIWQGRVLNSQFTDEELRSQGRCPLTPEEMGLLLAAFGFDNNTRLYLASHKVYGGEARISTLRQVFPRMEDKRSLASSEERARIKGKASLLAALDYYVSMHSDIFISASPGNMHNALVGHRTFENLKTIRPNMALIGQLFLNKSITWVDFQQALGEGHVNRQGQIRLRKPKQSIYTYPAPDCMCHV</sequence>
<evidence type="ECO:0000250" key="1">
    <source>
        <dbReference type="UniProtKB" id="Q9H488"/>
    </source>
</evidence>
<evidence type="ECO:0000255" key="2"/>
<evidence type="ECO:0000255" key="3">
    <source>
        <dbReference type="PROSITE-ProRule" id="PRU00498"/>
    </source>
</evidence>
<evidence type="ECO:0000305" key="4"/>
<evidence type="ECO:0000312" key="5">
    <source>
        <dbReference type="Araport" id="AT5G65470"/>
    </source>
</evidence>
<evidence type="ECO:0000312" key="6">
    <source>
        <dbReference type="EMBL" id="ARJ31456.1"/>
    </source>
</evidence>
<evidence type="ECO:0000312" key="7">
    <source>
        <dbReference type="EMBL" id="BAB11569.1"/>
    </source>
</evidence>
<protein>
    <recommendedName>
        <fullName evidence="4">O-fucosyltransferase 39</fullName>
        <shortName evidence="4">O-FucT-39</shortName>
        <ecNumber evidence="4">2.4.1.-</ecNumber>
    </recommendedName>
    <alternativeName>
        <fullName evidence="6">O-fucosyltransferase family protein</fullName>
    </alternativeName>
</protein>
<reference key="1">
    <citation type="submission" date="2017-04" db="EMBL/GenBank/DDBJ databases">
        <title>Arabidopsis glycosyltransferases: an update.</title>
        <authorList>
            <person name="Zeng W."/>
            <person name="Gluza P."/>
            <person name="Heazlewood J."/>
        </authorList>
    </citation>
    <scope>NUCLEOTIDE SEQUENCE [MRNA]</scope>
    <source>
        <strain>cv. Columbia</strain>
    </source>
</reference>
<reference key="2">
    <citation type="journal article" date="1998" name="DNA Res.">
        <title>Structural analysis of Arabidopsis thaliana chromosome 5. V. Sequence features of the regions of 1,381,565 bp covered by twenty one physically assigned P1 and TAC clones.</title>
        <authorList>
            <person name="Kaneko T."/>
            <person name="Kotani H."/>
            <person name="Nakamura Y."/>
            <person name="Sato S."/>
            <person name="Asamizu E."/>
            <person name="Miyajima N."/>
            <person name="Tabata S."/>
        </authorList>
    </citation>
    <scope>NUCLEOTIDE SEQUENCE [LARGE SCALE GENOMIC DNA]</scope>
    <source>
        <strain>cv. Columbia</strain>
    </source>
</reference>
<reference key="3">
    <citation type="journal article" date="2017" name="Plant J.">
        <title>Araport11: a complete reannotation of the Arabidopsis thaliana reference genome.</title>
        <authorList>
            <person name="Cheng C.Y."/>
            <person name="Krishnakumar V."/>
            <person name="Chan A.P."/>
            <person name="Thibaud-Nissen F."/>
            <person name="Schobel S."/>
            <person name="Town C.D."/>
        </authorList>
    </citation>
    <scope>GENOME REANNOTATION</scope>
    <source>
        <strain>cv. Columbia</strain>
    </source>
</reference>
<reference key="4">
    <citation type="journal article" date="2003" name="Science">
        <title>Empirical analysis of transcriptional activity in the Arabidopsis genome.</title>
        <authorList>
            <person name="Yamada K."/>
            <person name="Lim J."/>
            <person name="Dale J.M."/>
            <person name="Chen H."/>
            <person name="Shinn P."/>
            <person name="Palm C.J."/>
            <person name="Southwick A.M."/>
            <person name="Wu H.C."/>
            <person name="Kim C.J."/>
            <person name="Nguyen M."/>
            <person name="Pham P.K."/>
            <person name="Cheuk R.F."/>
            <person name="Karlin-Newmann G."/>
            <person name="Liu S.X."/>
            <person name="Lam B."/>
            <person name="Sakano H."/>
            <person name="Wu T."/>
            <person name="Yu G."/>
            <person name="Miranda M."/>
            <person name="Quach H.L."/>
            <person name="Tripp M."/>
            <person name="Chang C.H."/>
            <person name="Lee J.M."/>
            <person name="Toriumi M.J."/>
            <person name="Chan M.M."/>
            <person name="Tang C.C."/>
            <person name="Onodera C.S."/>
            <person name="Deng J.M."/>
            <person name="Akiyama K."/>
            <person name="Ansari Y."/>
            <person name="Arakawa T."/>
            <person name="Banh J."/>
            <person name="Banno F."/>
            <person name="Bowser L."/>
            <person name="Brooks S.Y."/>
            <person name="Carninci P."/>
            <person name="Chao Q."/>
            <person name="Choy N."/>
            <person name="Enju A."/>
            <person name="Goldsmith A.D."/>
            <person name="Gurjal M."/>
            <person name="Hansen N.F."/>
            <person name="Hayashizaki Y."/>
            <person name="Johnson-Hopson C."/>
            <person name="Hsuan V.W."/>
            <person name="Iida K."/>
            <person name="Karnes M."/>
            <person name="Khan S."/>
            <person name="Koesema E."/>
            <person name="Ishida J."/>
            <person name="Jiang P.X."/>
            <person name="Jones T."/>
            <person name="Kawai J."/>
            <person name="Kamiya A."/>
            <person name="Meyers C."/>
            <person name="Nakajima M."/>
            <person name="Narusaka M."/>
            <person name="Seki M."/>
            <person name="Sakurai T."/>
            <person name="Satou M."/>
            <person name="Tamse R."/>
            <person name="Vaysberg M."/>
            <person name="Wallender E.K."/>
            <person name="Wong C."/>
            <person name="Yamamura Y."/>
            <person name="Yuan S."/>
            <person name="Shinozaki K."/>
            <person name="Davis R.W."/>
            <person name="Theologis A."/>
            <person name="Ecker J.R."/>
        </authorList>
    </citation>
    <scope>NUCLEOTIDE SEQUENCE [LARGE SCALE MRNA]</scope>
    <source>
        <strain>cv. Columbia</strain>
    </source>
</reference>
<reference key="5">
    <citation type="submission" date="2006-07" db="EMBL/GenBank/DDBJ databases">
        <title>Large-scale analysis of RIKEN Arabidopsis full-length (RAFL) cDNAs.</title>
        <authorList>
            <person name="Totoki Y."/>
            <person name="Seki M."/>
            <person name="Ishida J."/>
            <person name="Nakajima M."/>
            <person name="Enju A."/>
            <person name="Kamiya A."/>
            <person name="Narusaka M."/>
            <person name="Shin-i T."/>
            <person name="Nakagawa M."/>
            <person name="Sakamoto N."/>
            <person name="Oishi K."/>
            <person name="Kohara Y."/>
            <person name="Kobayashi M."/>
            <person name="Toyoda A."/>
            <person name="Sakaki Y."/>
            <person name="Sakurai T."/>
            <person name="Iida K."/>
            <person name="Akiyama K."/>
            <person name="Satou M."/>
            <person name="Toyoda T."/>
            <person name="Konagaya A."/>
            <person name="Carninci P."/>
            <person name="Kawai J."/>
            <person name="Hayashizaki Y."/>
            <person name="Shinozaki K."/>
        </authorList>
    </citation>
    <scope>NUCLEOTIDE SEQUENCE [LARGE SCALE MRNA]</scope>
    <source>
        <strain>cv. Columbia</strain>
    </source>
</reference>
<reference key="6">
    <citation type="journal article" date="2012" name="Front. Plant Sci.">
        <title>Plant glycosyltransferases beyond CAZy: a perspective on DUF families.</title>
        <authorList>
            <person name="Hansen S.F."/>
            <person name="Harholt J."/>
            <person name="Oikawa A."/>
            <person name="Scheller H.V."/>
        </authorList>
    </citation>
    <scope>GENE FAMILY</scope>
    <scope>REVIEW</scope>
</reference>
<reference key="7">
    <citation type="journal article" date="2012" name="PLoS ONE">
        <title>The FRIABLE1 gene product affects cell adhesion in Arabidopsis.</title>
        <authorList>
            <person name="Neumetzler L."/>
            <person name="Humphrey T."/>
            <person name="Lumba S."/>
            <person name="Snyder S."/>
            <person name="Yeats T.H."/>
            <person name="Usadel B."/>
            <person name="Vasilevski A."/>
            <person name="Patel J."/>
            <person name="Rose J.K."/>
            <person name="Persson S."/>
            <person name="Bonetta D."/>
        </authorList>
    </citation>
    <scope>GENE FAMILY</scope>
</reference>
<reference key="8">
    <citation type="journal article" date="2012" name="PLoS ONE">
        <title>Identification of putative rhamnogalacturonan-II specific glycosyltransferases in Arabidopsis using a combination of bioinformatics approaches.</title>
        <authorList>
            <person name="Voxeur A."/>
            <person name="Andre A."/>
            <person name="Breton C."/>
            <person name="Lerouge P."/>
        </authorList>
    </citation>
    <scope>GENE FAMILY</scope>
</reference>
<reference key="9">
    <citation type="journal article" date="2013" name="Plant J.">
        <title>Identification of an additional protein involved in mannan biosynthesis.</title>
        <authorList>
            <person name="Wang Y."/>
            <person name="Mortimer J.C."/>
            <person name="Davis J."/>
            <person name="Dupree P."/>
            <person name="Keegstra K."/>
        </authorList>
    </citation>
    <scope>GENE FAMILY</scope>
</reference>
<reference key="10">
    <citation type="journal article" date="2014" name="Plant J.">
        <title>The plant glycosyltransferase clone collection for functional genomics.</title>
        <authorList>
            <person name="Lao J."/>
            <person name="Oikawa A."/>
            <person name="Bromley J.R."/>
            <person name="McInerney P."/>
            <person name="Suttangkakul A."/>
            <person name="Smith-Moritz A.M."/>
            <person name="Plahar H."/>
            <person name="Chiu T.-Y."/>
            <person name="Gonzalez Fernandez-Nino S.M.G."/>
            <person name="Ebert B."/>
            <person name="Yang F."/>
            <person name="Christiansen K.M."/>
            <person name="Hansen S.F."/>
            <person name="Stonebloom S."/>
            <person name="Adams P.D."/>
            <person name="Ronald P.C."/>
            <person name="Hillson N.J."/>
            <person name="Hadi M.Z."/>
            <person name="Vega-Sanchez M.E."/>
            <person name="Loque D."/>
            <person name="Scheller H.V."/>
            <person name="Heazlewood J.L."/>
        </authorList>
    </citation>
    <scope>WEB RESOURCE</scope>
</reference>
<gene>
    <name evidence="4" type="primary">OFUT39</name>
    <name evidence="5" type="ordered locus">At5g65470</name>
    <name evidence="7" type="ORF">MNA5.21</name>
</gene>
<proteinExistence type="evidence at transcript level"/>
<feature type="chain" id="PRO_5010840696" description="O-fucosyltransferase 39">
    <location>
        <begin position="1"/>
        <end position="504"/>
    </location>
</feature>
<feature type="transmembrane region" description="Helical; Signal-anchor for type II membrane protein" evidence="4">
    <location>
        <begin position="11"/>
        <end position="27"/>
    </location>
</feature>
<feature type="binding site" evidence="1">
    <location>
        <begin position="288"/>
        <end position="290"/>
    </location>
    <ligand>
        <name>substrate</name>
    </ligand>
</feature>
<feature type="glycosylation site" description="N-linked (GlcNAc...) asparagine" evidence="3">
    <location>
        <position position="115"/>
    </location>
</feature>
<feature type="glycosylation site" description="N-linked (GlcNAc...) asparagine" evidence="3">
    <location>
        <position position="359"/>
    </location>
</feature>
<feature type="glycosylation site" description="N-linked (GlcNAc...) asparagine" evidence="3">
    <location>
        <position position="460"/>
    </location>
</feature>
<feature type="sequence conflict" description="In Ref. 4; AAM13166/AAM91219." evidence="4" ref="4">
    <original>R</original>
    <variation>K</variation>
    <location>
        <position position="386"/>
    </location>
</feature>
<keyword id="KW-0119">Carbohydrate metabolism</keyword>
<keyword id="KW-0294">Fucose metabolism</keyword>
<keyword id="KW-0325">Glycoprotein</keyword>
<keyword id="KW-0328">Glycosyltransferase</keyword>
<keyword id="KW-0472">Membrane</keyword>
<keyword id="KW-1185">Reference proteome</keyword>
<keyword id="KW-0735">Signal-anchor</keyword>
<keyword id="KW-0808">Transferase</keyword>
<keyword id="KW-0812">Transmembrane</keyword>
<keyword id="KW-1133">Transmembrane helix</keyword>
<name>OFT39_ARATH</name>
<organism>
    <name type="scientific">Arabidopsis thaliana</name>
    <name type="common">Mouse-ear cress</name>
    <dbReference type="NCBI Taxonomy" id="3702"/>
    <lineage>
        <taxon>Eukaryota</taxon>
        <taxon>Viridiplantae</taxon>
        <taxon>Streptophyta</taxon>
        <taxon>Embryophyta</taxon>
        <taxon>Tracheophyta</taxon>
        <taxon>Spermatophyta</taxon>
        <taxon>Magnoliopsida</taxon>
        <taxon>eudicotyledons</taxon>
        <taxon>Gunneridae</taxon>
        <taxon>Pentapetalae</taxon>
        <taxon>rosids</taxon>
        <taxon>malvids</taxon>
        <taxon>Brassicales</taxon>
        <taxon>Brassicaceae</taxon>
        <taxon>Camelineae</taxon>
        <taxon>Arabidopsis</taxon>
    </lineage>
</organism>